<organism>
    <name type="scientific">Bothrops alternatus</name>
    <name type="common">Urutu</name>
    <name type="synonym">Rhinocerophis alternatus</name>
    <dbReference type="NCBI Taxonomy" id="64174"/>
    <lineage>
        <taxon>Eukaryota</taxon>
        <taxon>Metazoa</taxon>
        <taxon>Chordata</taxon>
        <taxon>Craniata</taxon>
        <taxon>Vertebrata</taxon>
        <taxon>Euteleostomi</taxon>
        <taxon>Lepidosauria</taxon>
        <taxon>Squamata</taxon>
        <taxon>Bifurcata</taxon>
        <taxon>Unidentata</taxon>
        <taxon>Episquamata</taxon>
        <taxon>Toxicofera</taxon>
        <taxon>Serpentes</taxon>
        <taxon>Colubroidea</taxon>
        <taxon>Viperidae</taxon>
        <taxon>Crotalinae</taxon>
        <taxon>Bothrops</taxon>
    </lineage>
</organism>
<comment type="function">
    <text evidence="1">This peptide both inhibits the activity of the angiotensin-converting enzyme (ACE) and enhances the action of bradykinin by inhibiting the peptidases that inactivate it. It acts as an indirect hypotensive agent (By similarity).</text>
</comment>
<comment type="subcellular location">
    <subcellularLocation>
        <location evidence="3">Secreted</location>
    </subcellularLocation>
</comment>
<comment type="tissue specificity">
    <text>Expressed by the venom gland.</text>
</comment>
<comment type="similarity">
    <text evidence="4">Belongs to the bradykinin-potentiating peptide family.</text>
</comment>
<sequence length="13" mass="1388">QGGWPRPGPEIPP</sequence>
<protein>
    <recommendedName>
        <fullName evidence="2">Bradykinin-potentiating peptide 13a</fullName>
        <shortName evidence="2">BPP-13a</shortName>
    </recommendedName>
</protein>
<feature type="peptide" id="PRO_0000343181" description="Bradykinin-potentiating peptide 13a" evidence="3">
    <location>
        <begin position="1"/>
        <end position="13"/>
    </location>
</feature>
<feature type="modified residue" description="Pyrrolidone carboxylic acid" evidence="3">
    <location>
        <position position="1"/>
    </location>
</feature>
<keyword id="KW-0903">Direct protein sequencing</keyword>
<keyword id="KW-0382">Hypotensive agent</keyword>
<keyword id="KW-0481">Metalloenzyme inhibitor</keyword>
<keyword id="KW-0483">Metalloprotease inhibitor</keyword>
<keyword id="KW-0646">Protease inhibitor</keyword>
<keyword id="KW-0873">Pyrrolidone carboxylic acid</keyword>
<keyword id="KW-0964">Secreted</keyword>
<keyword id="KW-0800">Toxin</keyword>
<dbReference type="GO" id="GO:0005576">
    <property type="term" value="C:extracellular region"/>
    <property type="evidence" value="ECO:0007669"/>
    <property type="project" value="UniProtKB-SubCell"/>
</dbReference>
<dbReference type="GO" id="GO:0030414">
    <property type="term" value="F:peptidase inhibitor activity"/>
    <property type="evidence" value="ECO:0007669"/>
    <property type="project" value="UniProtKB-KW"/>
</dbReference>
<dbReference type="GO" id="GO:0090729">
    <property type="term" value="F:toxin activity"/>
    <property type="evidence" value="ECO:0007669"/>
    <property type="project" value="UniProtKB-KW"/>
</dbReference>
<dbReference type="GO" id="GO:0008217">
    <property type="term" value="P:regulation of blood pressure"/>
    <property type="evidence" value="ECO:0007669"/>
    <property type="project" value="UniProtKB-KW"/>
</dbReference>
<reference key="1">
    <citation type="journal article" date="2008" name="J. Mass Spectrom.">
        <title>Peptide fingerprinting of snake venoms by direct infusion nano-electrospray ionization mass spectrometry: potential use in venom identification and taxonomy.</title>
        <authorList>
            <person name="Souza G.H.M.F."/>
            <person name="Catharino R.R."/>
            <person name="Ifa D.R."/>
            <person name="Eberlin M.N."/>
            <person name="Hyslop S."/>
        </authorList>
    </citation>
    <scope>PROTEIN SEQUENCE</scope>
    <scope>IDENTIFICATION BY MASS SPECTROMETRY</scope>
    <scope>SUBCELLULAR LOCATION</scope>
    <scope>PYROGLUTAMATE FORMATION AT GLN-1</scope>
    <source>
        <tissue>Venom</tissue>
    </source>
</reference>
<evidence type="ECO:0000250" key="1"/>
<evidence type="ECO:0000250" key="2">
    <source>
        <dbReference type="UniProtKB" id="Q6LEM5"/>
    </source>
</evidence>
<evidence type="ECO:0000269" key="3">
    <source>
    </source>
</evidence>
<evidence type="ECO:0000305" key="4"/>
<accession>P0C7R7</accession>
<name>BPPDA_BOTAL</name>
<proteinExistence type="evidence at protein level"/>